<organism>
    <name type="scientific">Aureobasidium melanogenum</name>
    <name type="common">Aureobasidium pullulans var. melanogenum</name>
    <dbReference type="NCBI Taxonomy" id="46634"/>
    <lineage>
        <taxon>Eukaryota</taxon>
        <taxon>Fungi</taxon>
        <taxon>Dikarya</taxon>
        <taxon>Ascomycota</taxon>
        <taxon>Pezizomycotina</taxon>
        <taxon>Dothideomycetes</taxon>
        <taxon>Dothideomycetidae</taxon>
        <taxon>Dothideales</taxon>
        <taxon>Saccotheciaceae</taxon>
        <taxon>Aureobasidium</taxon>
    </lineage>
</organism>
<name>MPDH_AURME</name>
<evidence type="ECO:0000250" key="1">
    <source>
        <dbReference type="UniProtKB" id="Q4X1A4"/>
    </source>
</evidence>
<evidence type="ECO:0000269" key="2">
    <source>
    </source>
</evidence>
<evidence type="ECO:0000269" key="3">
    <source>
    </source>
</evidence>
<evidence type="ECO:0000269" key="4">
    <source>
    </source>
</evidence>
<evidence type="ECO:0000269" key="5">
    <source>
    </source>
</evidence>
<evidence type="ECO:0000303" key="6">
    <source>
    </source>
</evidence>
<evidence type="ECO:0000305" key="7"/>
<evidence type="ECO:0000305" key="8">
    <source>
    </source>
</evidence>
<comment type="function">
    <text evidence="4 8">Catalyzes the NAD(H)-dependent interconversion of D-fructose 6-phosphate and D-mannitol 1-phosphate in the mannitol metabolic pathway (Probable). Plays a key role in liamocins biosynthesis by providing the mannitol moity that is linked to 3,5-dihydroxydecanoic acid (provided by the HR-PKS PKS1) via ester bond formation catalyzed by the esterase EST1 (PubMed:32003433).</text>
</comment>
<comment type="catalytic activity">
    <reaction evidence="1">
        <text>D-mannitol 1-phosphate + NAD(+) = beta-D-fructose 6-phosphate + NADH + H(+)</text>
        <dbReference type="Rhea" id="RHEA:19661"/>
        <dbReference type="ChEBI" id="CHEBI:15378"/>
        <dbReference type="ChEBI" id="CHEBI:57540"/>
        <dbReference type="ChEBI" id="CHEBI:57634"/>
        <dbReference type="ChEBI" id="CHEBI:57945"/>
        <dbReference type="ChEBI" id="CHEBI:61381"/>
        <dbReference type="EC" id="1.1.1.17"/>
    </reaction>
</comment>
<comment type="subunit">
    <text evidence="1">Monomer.</text>
</comment>
<comment type="induction">
    <text evidence="5">Expression is regulated by the cAMP-PKA and HOG1 signaling pathways via the transcriptional activator MSN2.</text>
</comment>
<comment type="disruption phenotype">
    <text evidence="4">Affects the ability to produce liamocins with a mannitol headgroup.</text>
</comment>
<comment type="biotechnology">
    <text evidence="2 3">Liamocins have high bioactivity against the pathogenic bacteria Streptococcus spp. and can be potential new specific inhibitors of oral streptococcal biofilms without affecting normal oral microflora (PubMed:30627519). Liamocins are also able to inhibit human cancer cell lines such as breast cancer cell lines T47D and SK-BR3 or the cervical cancer cell line HeLa (PubMed:21293903).</text>
</comment>
<comment type="similarity">
    <text evidence="7">Belongs to the mannitol dehydrogenase family.</text>
</comment>
<protein>
    <recommendedName>
        <fullName evidence="6">Mannitol-1-phosphate 5-dehydrogenase</fullName>
        <shortName evidence="6">MPDH</shortName>
        <ecNumber evidence="1">1.1.1.17</ecNumber>
    </recommendedName>
</protein>
<feature type="chain" id="PRO_0000461622" description="Mannitol-1-phosphate 5-dehydrogenase">
    <location>
        <begin position="1"/>
        <end position="386"/>
    </location>
</feature>
<feature type="active site" evidence="1">
    <location>
        <position position="214"/>
    </location>
</feature>
<feature type="binding site" evidence="1">
    <location>
        <begin position="6"/>
        <end position="17"/>
    </location>
    <ligand>
        <name>NAD(+)</name>
        <dbReference type="ChEBI" id="CHEBI:57540"/>
    </ligand>
</feature>
<keyword id="KW-0520">NAD</keyword>
<keyword id="KW-0560">Oxidoreductase</keyword>
<reference key="1">
    <citation type="submission" date="2017-06" db="EMBL/GenBank/DDBJ databases">
        <authorList>
            <person name="Kim H.J."/>
            <person name="Triplett B.A."/>
        </authorList>
    </citation>
    <scope>NUCLEOTIDE SEQUENCE [GENOMIC DNA]</scope>
    <source>
        <strain>6-1-2</strain>
    </source>
</reference>
<reference key="2">
    <citation type="journal article" date="2011" name="Biotechnol. Lett.">
        <title>Heavy oils produced by Aureobasidium pullulans.</title>
        <authorList>
            <person name="Manitchotpisit P."/>
            <person name="Price N.P."/>
            <person name="Leathers T.D."/>
            <person name="Punnapayak H."/>
        </authorList>
    </citation>
    <scope>BIOTECHNOLOGY</scope>
</reference>
<reference key="3">
    <citation type="journal article" date="2019" name="Biotechnol. Rep.">
        <title>Inhibition of Streptococcus mutans and S. sobrinus biofilms by liamocins from Aureobasidium pullulans.</title>
        <authorList>
            <person name="Leathers T.D."/>
            <person name="Rich J.O."/>
            <person name="Bischoff K.M."/>
            <person name="Skory C.D."/>
            <person name="Nunnally M.S."/>
        </authorList>
    </citation>
    <scope>BIOTECHNOLOGY</scope>
</reference>
<reference key="4">
    <citation type="journal article" date="2020" name="Biochem. J.">
        <title>Genetic evidences for the core biosynthesis pathway, regulation, transport and secretion of liamocins in yeast-like fungal cells.</title>
        <authorList>
            <person name="Xue S.J."/>
            <person name="Liu G.L."/>
            <person name="Chi Z."/>
            <person name="Gao Z.C."/>
            <person name="Hu Z."/>
            <person name="Chi Z.M."/>
        </authorList>
    </citation>
    <scope>FUNCTION</scope>
    <scope>DISRUPTION PHENOTYPE</scope>
</reference>
<reference key="5">
    <citation type="journal article" date="2021" name="Enzyme Microb. Technol.">
        <title>cAMP-PKA and HOG1 signaling pathways regulate liamocin production by different ways via the transcriptional activator Msn2 in Aureobasidium melanogenum.</title>
        <authorList>
            <person name="Zhang M."/>
            <person name="Gao Z.C."/>
            <person name="Chi Z."/>
            <person name="Liu G.L."/>
            <person name="Hu Z."/>
            <person name="Chi Z.M."/>
        </authorList>
    </citation>
    <scope>INDUCTION</scope>
</reference>
<sequence length="386" mass="43115">MSDMKAIHFGGGNIGRGFVAEFLHKSGYEVVFVDVMDAIINALQQNKSYTVTEVGTSETKSKTIDNYRAINSKTDEDKVVEEIATADIVTCAVGPNILKFIAPVIAKGIENRKKDSPIAVIACENAIGATDTLRKFIEEKLSDSTKSNIQDKARFANSAIDRIVPMQDENAGLNVKIEKFYEWCVESKPFLPSQPPKIEGVHFVEDLTPFIERKLFTVNTGHATAAYYGYNRGKECIHDVLQDKELNEIVRNTLKETAHLIVNKHEISEEDQNQYVEKIIKRISNPVLKDNVERVGRAPLRKLSRNERFIGPAAHLAEMGAKYDALLGGIEMCLRFQNVEGDDESFELAKILKENSSSDATEKITGLERNHTLFPAVEEVVKKVQA</sequence>
<accession>A0A223HDH4</accession>
<dbReference type="EC" id="1.1.1.17" evidence="1"/>
<dbReference type="EMBL" id="MF370930">
    <property type="protein sequence ID" value="AST36437.1"/>
    <property type="molecule type" value="Genomic_DNA"/>
</dbReference>
<dbReference type="GO" id="GO:0005829">
    <property type="term" value="C:cytosol"/>
    <property type="evidence" value="ECO:0007669"/>
    <property type="project" value="TreeGrafter"/>
</dbReference>
<dbReference type="GO" id="GO:0008926">
    <property type="term" value="F:mannitol-1-phosphate 5-dehydrogenase activity"/>
    <property type="evidence" value="ECO:0007669"/>
    <property type="project" value="UniProtKB-EC"/>
</dbReference>
<dbReference type="GO" id="GO:0019592">
    <property type="term" value="P:mannitol catabolic process"/>
    <property type="evidence" value="ECO:0007669"/>
    <property type="project" value="TreeGrafter"/>
</dbReference>
<dbReference type="Gene3D" id="1.10.1040.10">
    <property type="entry name" value="N-(1-d-carboxylethyl)-l-norvaline Dehydrogenase, domain 2"/>
    <property type="match status" value="1"/>
</dbReference>
<dbReference type="Gene3D" id="3.40.50.720">
    <property type="entry name" value="NAD(P)-binding Rossmann-like Domain"/>
    <property type="match status" value="1"/>
</dbReference>
<dbReference type="HAMAP" id="MF_00196">
    <property type="entry name" value="Mannitol_dehydrog"/>
    <property type="match status" value="1"/>
</dbReference>
<dbReference type="InterPro" id="IPR008927">
    <property type="entry name" value="6-PGluconate_DH-like_C_sf"/>
</dbReference>
<dbReference type="InterPro" id="IPR013328">
    <property type="entry name" value="6PGD_dom2"/>
</dbReference>
<dbReference type="InterPro" id="IPR023028">
    <property type="entry name" value="Mannitol_1_phos_5_DH"/>
</dbReference>
<dbReference type="InterPro" id="IPR000669">
    <property type="entry name" value="Mannitol_DH"/>
</dbReference>
<dbReference type="InterPro" id="IPR013118">
    <property type="entry name" value="Mannitol_DH_C"/>
</dbReference>
<dbReference type="InterPro" id="IPR013131">
    <property type="entry name" value="Mannitol_DH_N"/>
</dbReference>
<dbReference type="InterPro" id="IPR036291">
    <property type="entry name" value="NAD(P)-bd_dom_sf"/>
</dbReference>
<dbReference type="NCBIfam" id="NF002647">
    <property type="entry name" value="PRK02318.1-3"/>
    <property type="match status" value="1"/>
</dbReference>
<dbReference type="NCBIfam" id="NF002652">
    <property type="entry name" value="PRK02318.2-5"/>
    <property type="match status" value="1"/>
</dbReference>
<dbReference type="PANTHER" id="PTHR30524:SF0">
    <property type="entry name" value="ALTRONATE OXIDOREDUCTASE-RELATED"/>
    <property type="match status" value="1"/>
</dbReference>
<dbReference type="PANTHER" id="PTHR30524">
    <property type="entry name" value="MANNITOL-1-PHOSPHATE 5-DEHYDROGENASE"/>
    <property type="match status" value="1"/>
</dbReference>
<dbReference type="Pfam" id="PF01232">
    <property type="entry name" value="Mannitol_dh"/>
    <property type="match status" value="1"/>
</dbReference>
<dbReference type="Pfam" id="PF08125">
    <property type="entry name" value="Mannitol_dh_C"/>
    <property type="match status" value="1"/>
</dbReference>
<dbReference type="PRINTS" id="PR00084">
    <property type="entry name" value="MTLDHDRGNASE"/>
</dbReference>
<dbReference type="SUPFAM" id="SSF48179">
    <property type="entry name" value="6-phosphogluconate dehydrogenase C-terminal domain-like"/>
    <property type="match status" value="1"/>
</dbReference>
<dbReference type="SUPFAM" id="SSF51735">
    <property type="entry name" value="NAD(P)-binding Rossmann-fold domains"/>
    <property type="match status" value="1"/>
</dbReference>
<proteinExistence type="evidence at protein level"/>